<organism>
    <name type="scientific">Homo sapiens</name>
    <name type="common">Human</name>
    <dbReference type="NCBI Taxonomy" id="9606"/>
    <lineage>
        <taxon>Eukaryota</taxon>
        <taxon>Metazoa</taxon>
        <taxon>Chordata</taxon>
        <taxon>Craniata</taxon>
        <taxon>Vertebrata</taxon>
        <taxon>Euteleostomi</taxon>
        <taxon>Mammalia</taxon>
        <taxon>Eutheria</taxon>
        <taxon>Euarchontoglires</taxon>
        <taxon>Primates</taxon>
        <taxon>Haplorrhini</taxon>
        <taxon>Catarrhini</taxon>
        <taxon>Hominidae</taxon>
        <taxon>Homo</taxon>
    </lineage>
</organism>
<dbReference type="EC" id="2.3.2.23" evidence="2"/>
<dbReference type="EMBL" id="AL161893">
    <property type="status" value="NOT_ANNOTATED_CDS"/>
    <property type="molecule type" value="Genomic_DNA"/>
</dbReference>
<dbReference type="EMBL" id="CH471075">
    <property type="protein sequence ID" value="EAX08456.1"/>
    <property type="molecule type" value="Genomic_DNA"/>
</dbReference>
<dbReference type="EMBL" id="BQ438552">
    <property type="status" value="NOT_ANNOTATED_CDS"/>
    <property type="molecule type" value="mRNA"/>
</dbReference>
<dbReference type="CCDS" id="CCDS86346.1"/>
<dbReference type="RefSeq" id="NP_001342176.1">
    <property type="nucleotide sequence ID" value="NM_001355247.2"/>
</dbReference>
<dbReference type="SMR" id="A0A1B0GUS4"/>
<dbReference type="FunCoup" id="A0A1B0GUS4">
    <property type="interactions" value="257"/>
</dbReference>
<dbReference type="STRING" id="9606.ENSP00000490225"/>
<dbReference type="iPTMnet" id="A0A1B0GUS4"/>
<dbReference type="PhosphoSitePlus" id="A0A1B0GUS4"/>
<dbReference type="BioMuta" id="UBE2L5"/>
<dbReference type="jPOST" id="A0A1B0GUS4"/>
<dbReference type="MassIVE" id="A0A1B0GUS4"/>
<dbReference type="PeptideAtlas" id="A0A1B0GUS4"/>
<dbReference type="Pumba" id="A0A1B0GUS4"/>
<dbReference type="Ensembl" id="ENST00000436446.1">
    <property type="protein sequence ID" value="ENSP00000490834.1"/>
    <property type="gene ID" value="ENSG00000236444.5"/>
</dbReference>
<dbReference type="Ensembl" id="ENST00000635918.2">
    <property type="protein sequence ID" value="ENSP00000490225.1"/>
    <property type="gene ID" value="ENSG00000236444.5"/>
</dbReference>
<dbReference type="Ensembl" id="ENST00000638137.1">
    <property type="protein sequence ID" value="ENSP00000490931.1"/>
    <property type="gene ID" value="ENSG00000236444.5"/>
</dbReference>
<dbReference type="GeneID" id="171222"/>
<dbReference type="MANE-Select" id="ENST00000635918.2">
    <property type="protein sequence ID" value="ENSP00000490225.1"/>
    <property type="RefSeq nucleotide sequence ID" value="NM_001355247.2"/>
    <property type="RefSeq protein sequence ID" value="NP_001342176.1"/>
</dbReference>
<dbReference type="AGR" id="HGNC:13477"/>
<dbReference type="GeneCards" id="UBE2L5"/>
<dbReference type="HGNC" id="HGNC:13477">
    <property type="gene designation" value="UBE2L5"/>
</dbReference>
<dbReference type="HPA" id="ENSG00000236444">
    <property type="expression patterns" value="Tissue enriched (testis)"/>
</dbReference>
<dbReference type="neXtProt" id="NX_A0A1B0GUS4"/>
<dbReference type="OpenTargets" id="ENSG00000236444"/>
<dbReference type="VEuPathDB" id="HostDB:ENSG00000236444"/>
<dbReference type="GeneTree" id="ENSGT00940000153654"/>
<dbReference type="InParanoid" id="A0A1B0GUS4"/>
<dbReference type="OMA" id="TMNKRLV"/>
<dbReference type="OrthoDB" id="9973183at2759"/>
<dbReference type="PAN-GO" id="A0A1B0GUS4">
    <property type="GO annotations" value="6 GO annotations based on evolutionary models"/>
</dbReference>
<dbReference type="SignaLink" id="A0A1B0GUS4"/>
<dbReference type="SIGNOR" id="A0A1B0GUS4"/>
<dbReference type="UniPathway" id="UPA00143"/>
<dbReference type="ChiTaRS" id="UBE2L5P">
    <property type="organism name" value="human"/>
</dbReference>
<dbReference type="Pharos" id="A0A1B0GUS4">
    <property type="development level" value="Tdark"/>
</dbReference>
<dbReference type="PRO" id="PR:A0A1B0GUS4"/>
<dbReference type="Proteomes" id="UP000005640">
    <property type="component" value="Chromosome 13"/>
</dbReference>
<dbReference type="RNAct" id="A0A1B0GUS4">
    <property type="molecule type" value="protein"/>
</dbReference>
<dbReference type="Bgee" id="ENSG00000236444">
    <property type="expression patterns" value="Expressed in left testis and 82 other cell types or tissues"/>
</dbReference>
<dbReference type="GO" id="GO:0005634">
    <property type="term" value="C:nucleus"/>
    <property type="evidence" value="ECO:0000318"/>
    <property type="project" value="GO_Central"/>
</dbReference>
<dbReference type="GO" id="GO:0005524">
    <property type="term" value="F:ATP binding"/>
    <property type="evidence" value="ECO:0007669"/>
    <property type="project" value="UniProtKB-KW"/>
</dbReference>
<dbReference type="GO" id="GO:0016874">
    <property type="term" value="F:ligase activity"/>
    <property type="evidence" value="ECO:0007669"/>
    <property type="project" value="UniProtKB-KW"/>
</dbReference>
<dbReference type="GO" id="GO:0061631">
    <property type="term" value="F:ubiquitin conjugating enzyme activity"/>
    <property type="evidence" value="ECO:0000318"/>
    <property type="project" value="GO_Central"/>
</dbReference>
<dbReference type="GO" id="GO:0070979">
    <property type="term" value="P:protein K11-linked ubiquitination"/>
    <property type="evidence" value="ECO:0000318"/>
    <property type="project" value="GO_Central"/>
</dbReference>
<dbReference type="GO" id="GO:0006511">
    <property type="term" value="P:ubiquitin-dependent protein catabolic process"/>
    <property type="evidence" value="ECO:0000318"/>
    <property type="project" value="GO_Central"/>
</dbReference>
<dbReference type="CDD" id="cd23801">
    <property type="entry name" value="UBCc_UBE2L3"/>
    <property type="match status" value="1"/>
</dbReference>
<dbReference type="FunFam" id="3.10.110.10:FF:000011">
    <property type="entry name" value="Ubiquitin-conjugating enzyme E2 L3"/>
    <property type="match status" value="1"/>
</dbReference>
<dbReference type="Gene3D" id="3.10.110.10">
    <property type="entry name" value="Ubiquitin Conjugating Enzyme"/>
    <property type="match status" value="1"/>
</dbReference>
<dbReference type="InterPro" id="IPR050113">
    <property type="entry name" value="Ub_conjugating_enzyme"/>
</dbReference>
<dbReference type="InterPro" id="IPR000608">
    <property type="entry name" value="UBQ-conjugat_E2_core"/>
</dbReference>
<dbReference type="InterPro" id="IPR023313">
    <property type="entry name" value="UBQ-conjugating_AS"/>
</dbReference>
<dbReference type="InterPro" id="IPR016135">
    <property type="entry name" value="UBQ-conjugating_enzyme/RWD"/>
</dbReference>
<dbReference type="PANTHER" id="PTHR24067">
    <property type="entry name" value="UBIQUITIN-CONJUGATING ENZYME E2"/>
    <property type="match status" value="1"/>
</dbReference>
<dbReference type="Pfam" id="PF00179">
    <property type="entry name" value="UQ_con"/>
    <property type="match status" value="1"/>
</dbReference>
<dbReference type="SMART" id="SM00212">
    <property type="entry name" value="UBCc"/>
    <property type="match status" value="1"/>
</dbReference>
<dbReference type="SUPFAM" id="SSF54495">
    <property type="entry name" value="UBC-like"/>
    <property type="match status" value="1"/>
</dbReference>
<dbReference type="PROSITE" id="PS00183">
    <property type="entry name" value="UBC_1"/>
    <property type="match status" value="1"/>
</dbReference>
<dbReference type="PROSITE" id="PS50127">
    <property type="entry name" value="UBC_2"/>
    <property type="match status" value="1"/>
</dbReference>
<accession>A0A1B0GUS4</accession>
<feature type="chain" id="PRO_0000443500" description="Ubiquitin-conjugating enzyme E2 L5">
    <location>
        <begin position="1"/>
        <end position="154"/>
    </location>
</feature>
<feature type="domain" description="UBC core" evidence="1">
    <location>
        <begin position="2"/>
        <end position="149"/>
    </location>
</feature>
<feature type="active site" description="Glycyl thioester intermediate" evidence="1 2">
    <location>
        <position position="86"/>
    </location>
</feature>
<evidence type="ECO:0000255" key="1">
    <source>
        <dbReference type="PROSITE-ProRule" id="PRU00388"/>
    </source>
</evidence>
<evidence type="ECO:0000255" key="2">
    <source>
        <dbReference type="PROSITE-ProRule" id="PRU10133"/>
    </source>
</evidence>
<evidence type="ECO:0000305" key="3"/>
<evidence type="ECO:0000312" key="4">
    <source>
        <dbReference type="HGNC" id="HGNC:13477"/>
    </source>
</evidence>
<sequence length="154" mass="17875">MAASRRLMKELEEIRKCGMENFRNIQVDEANLLTWQGLIVPDNPPYNKGAFRIEINFPAEYPFKPPRITFKTKIYHPNIDEKGQVCLPVISAENWKPATKTDQVIQSLIALVNDPQPEHPLRADLAEEYSNDRKKFCKNAEEFTKKYGEKRPVD</sequence>
<reference key="1">
    <citation type="journal article" date="2004" name="Nature">
        <title>The DNA sequence and analysis of human chromosome 13.</title>
        <authorList>
            <person name="Dunham A."/>
            <person name="Matthews L.H."/>
            <person name="Burton J."/>
            <person name="Ashurst J.L."/>
            <person name="Howe K.L."/>
            <person name="Ashcroft K.J."/>
            <person name="Beare D.M."/>
            <person name="Burford D.C."/>
            <person name="Hunt S.E."/>
            <person name="Griffiths-Jones S."/>
            <person name="Jones M.C."/>
            <person name="Keenan S.J."/>
            <person name="Oliver K."/>
            <person name="Scott C.E."/>
            <person name="Ainscough R."/>
            <person name="Almeida J.P."/>
            <person name="Ambrose K.D."/>
            <person name="Andrews D.T."/>
            <person name="Ashwell R.I.S."/>
            <person name="Babbage A.K."/>
            <person name="Bagguley C.L."/>
            <person name="Bailey J."/>
            <person name="Bannerjee R."/>
            <person name="Barlow K.F."/>
            <person name="Bates K."/>
            <person name="Beasley H."/>
            <person name="Bird C.P."/>
            <person name="Bray-Allen S."/>
            <person name="Brown A.J."/>
            <person name="Brown J.Y."/>
            <person name="Burrill W."/>
            <person name="Carder C."/>
            <person name="Carter N.P."/>
            <person name="Chapman J.C."/>
            <person name="Clamp M.E."/>
            <person name="Clark S.Y."/>
            <person name="Clarke G."/>
            <person name="Clee C.M."/>
            <person name="Clegg S.C."/>
            <person name="Cobley V."/>
            <person name="Collins J.E."/>
            <person name="Corby N."/>
            <person name="Coville G.J."/>
            <person name="Deloukas P."/>
            <person name="Dhami P."/>
            <person name="Dunham I."/>
            <person name="Dunn M."/>
            <person name="Earthrowl M.E."/>
            <person name="Ellington A.G."/>
            <person name="Faulkner L."/>
            <person name="Frankish A.G."/>
            <person name="Frankland J."/>
            <person name="French L."/>
            <person name="Garner P."/>
            <person name="Garnett J."/>
            <person name="Gilbert J.G.R."/>
            <person name="Gilson C.J."/>
            <person name="Ghori J."/>
            <person name="Grafham D.V."/>
            <person name="Gribble S.M."/>
            <person name="Griffiths C."/>
            <person name="Hall R.E."/>
            <person name="Hammond S."/>
            <person name="Harley J.L."/>
            <person name="Hart E.A."/>
            <person name="Heath P.D."/>
            <person name="Howden P.J."/>
            <person name="Huckle E.J."/>
            <person name="Hunt P.J."/>
            <person name="Hunt A.R."/>
            <person name="Johnson C."/>
            <person name="Johnson D."/>
            <person name="Kay M."/>
            <person name="Kimberley A.M."/>
            <person name="King A."/>
            <person name="Laird G.K."/>
            <person name="Langford C.J."/>
            <person name="Lawlor S."/>
            <person name="Leongamornlert D.A."/>
            <person name="Lloyd D.M."/>
            <person name="Lloyd C."/>
            <person name="Loveland J.E."/>
            <person name="Lovell J."/>
            <person name="Martin S."/>
            <person name="Mashreghi-Mohammadi M."/>
            <person name="McLaren S.J."/>
            <person name="McMurray A."/>
            <person name="Milne S."/>
            <person name="Moore M.J.F."/>
            <person name="Nickerson T."/>
            <person name="Palmer S.A."/>
            <person name="Pearce A.V."/>
            <person name="Peck A.I."/>
            <person name="Pelan S."/>
            <person name="Phillimore B."/>
            <person name="Porter K.M."/>
            <person name="Rice C.M."/>
            <person name="Searle S."/>
            <person name="Sehra H.K."/>
            <person name="Shownkeen R."/>
            <person name="Skuce C.D."/>
            <person name="Smith M."/>
            <person name="Steward C.A."/>
            <person name="Sycamore N."/>
            <person name="Tester J."/>
            <person name="Thomas D.W."/>
            <person name="Tracey A."/>
            <person name="Tromans A."/>
            <person name="Tubby B."/>
            <person name="Wall M."/>
            <person name="Wallis J.M."/>
            <person name="West A.P."/>
            <person name="Whitehead S.L."/>
            <person name="Willey D.L."/>
            <person name="Wilming L."/>
            <person name="Wray P.W."/>
            <person name="Wright M.W."/>
            <person name="Young L."/>
            <person name="Coulson A."/>
            <person name="Durbin R.M."/>
            <person name="Hubbard T."/>
            <person name="Sulston J.E."/>
            <person name="Beck S."/>
            <person name="Bentley D.R."/>
            <person name="Rogers J."/>
            <person name="Ross M.T."/>
        </authorList>
    </citation>
    <scope>NUCLEOTIDE SEQUENCE [LARGE SCALE GENOMIC DNA]</scope>
</reference>
<reference key="2">
    <citation type="submission" date="2005-07" db="EMBL/GenBank/DDBJ databases">
        <authorList>
            <person name="Mural R.J."/>
            <person name="Istrail S."/>
            <person name="Sutton G.G."/>
            <person name="Florea L."/>
            <person name="Halpern A.L."/>
            <person name="Mobarry C.M."/>
            <person name="Lippert R."/>
            <person name="Walenz B."/>
            <person name="Shatkay H."/>
            <person name="Dew I."/>
            <person name="Miller J.R."/>
            <person name="Flanigan M.J."/>
            <person name="Edwards N.J."/>
            <person name="Bolanos R."/>
            <person name="Fasulo D."/>
            <person name="Halldorsson B.V."/>
            <person name="Hannenhalli S."/>
            <person name="Turner R."/>
            <person name="Yooseph S."/>
            <person name="Lu F."/>
            <person name="Nusskern D.R."/>
            <person name="Shue B.C."/>
            <person name="Zheng X.H."/>
            <person name="Zhong F."/>
            <person name="Delcher A.L."/>
            <person name="Huson D.H."/>
            <person name="Kravitz S.A."/>
            <person name="Mouchard L."/>
            <person name="Reinert K."/>
            <person name="Remington K.A."/>
            <person name="Clark A.G."/>
            <person name="Waterman M.S."/>
            <person name="Eichler E.E."/>
            <person name="Adams M.D."/>
            <person name="Hunkapiller M.W."/>
            <person name="Myers E.W."/>
            <person name="Venter J.C."/>
        </authorList>
    </citation>
    <scope>NUCLEOTIDE SEQUENCE [LARGE SCALE GENOMIC DNA]</scope>
</reference>
<reference key="3">
    <citation type="journal article" date="2004" name="Genome Res.">
        <title>The status, quality, and expansion of the NIH full-length cDNA project: the Mammalian Gene Collection (MGC).</title>
        <authorList>
            <consortium name="The MGC Project Team"/>
        </authorList>
    </citation>
    <scope>NUCLEOTIDE SEQUENCE [LARGE SCALE MRNA]</scope>
</reference>
<comment type="function">
    <text evidence="1">Catalyzes the covalent attachment of ubiquitin to other proteins.</text>
</comment>
<comment type="catalytic activity">
    <reaction evidence="1 2">
        <text>S-ubiquitinyl-[E1 ubiquitin-activating enzyme]-L-cysteine + [E2 ubiquitin-conjugating enzyme]-L-cysteine = [E1 ubiquitin-activating enzyme]-L-cysteine + S-ubiquitinyl-[E2 ubiquitin-conjugating enzyme]-L-cysteine.</text>
        <dbReference type="EC" id="2.3.2.23"/>
    </reaction>
</comment>
<comment type="pathway">
    <text evidence="1">Protein modification; protein ubiquitination.</text>
</comment>
<comment type="similarity">
    <text evidence="1">Belongs to the ubiquitin-conjugating enzyme family.</text>
</comment>
<name>UB2L5_HUMAN</name>
<protein>
    <recommendedName>
        <fullName evidence="3">Ubiquitin-conjugating enzyme E2 L5</fullName>
        <ecNumber evidence="2">2.3.2.23</ecNumber>
    </recommendedName>
    <alternativeName>
        <fullName evidence="2">Ubiquitin-protein ligase L5</fullName>
    </alternativeName>
</protein>
<keyword id="KW-0067">ATP-binding</keyword>
<keyword id="KW-0436">Ligase</keyword>
<keyword id="KW-0547">Nucleotide-binding</keyword>
<keyword id="KW-1267">Proteomics identification</keyword>
<keyword id="KW-1185">Reference proteome</keyword>
<keyword id="KW-0808">Transferase</keyword>
<keyword id="KW-0833">Ubl conjugation pathway</keyword>
<gene>
    <name evidence="4" type="primary">UBE2L5</name>
</gene>
<proteinExistence type="evidence at protein level"/>